<name>DARP_SALPB</name>
<accession>A9N578</accession>
<comment type="function">
    <text evidence="1">Member of a network of 50S ribosomal subunit biogenesis factors which assembles along the 30S-50S interface, preventing incorrect 23S rRNA structures from forming. Promotes peptidyl transferase center (PTC) maturation.</text>
</comment>
<comment type="subcellular location">
    <subcellularLocation>
        <location evidence="1">Cytoplasm</location>
    </subcellularLocation>
    <text evidence="1">Associates with late stage pre-50S ribosomal subunits.</text>
</comment>
<comment type="similarity">
    <text evidence="1">Belongs to the DarP family.</text>
</comment>
<gene>
    <name evidence="1" type="primary">darP</name>
    <name type="ordered locus">SPAB_05586</name>
</gene>
<dbReference type="EMBL" id="CP000886">
    <property type="protein sequence ID" value="ABX70855.1"/>
    <property type="molecule type" value="Genomic_DNA"/>
</dbReference>
<dbReference type="SMR" id="A9N578"/>
<dbReference type="KEGG" id="spq:SPAB_05586"/>
<dbReference type="PATRIC" id="fig|1016998.12.peg.5236"/>
<dbReference type="HOGENOM" id="CLU_106757_2_0_6"/>
<dbReference type="BioCyc" id="SENT1016998:SPAB_RS22795-MONOMER"/>
<dbReference type="Proteomes" id="UP000008556">
    <property type="component" value="Chromosome"/>
</dbReference>
<dbReference type="GO" id="GO:0005829">
    <property type="term" value="C:cytosol"/>
    <property type="evidence" value="ECO:0007669"/>
    <property type="project" value="TreeGrafter"/>
</dbReference>
<dbReference type="GO" id="GO:0043022">
    <property type="term" value="F:ribosome binding"/>
    <property type="evidence" value="ECO:0007669"/>
    <property type="project" value="UniProtKB-UniRule"/>
</dbReference>
<dbReference type="GO" id="GO:0019843">
    <property type="term" value="F:rRNA binding"/>
    <property type="evidence" value="ECO:0007669"/>
    <property type="project" value="UniProtKB-UniRule"/>
</dbReference>
<dbReference type="GO" id="GO:1902626">
    <property type="term" value="P:assembly of large subunit precursor of preribosome"/>
    <property type="evidence" value="ECO:0007669"/>
    <property type="project" value="UniProtKB-UniRule"/>
</dbReference>
<dbReference type="CDD" id="cd16331">
    <property type="entry name" value="YjgA-like"/>
    <property type="match status" value="1"/>
</dbReference>
<dbReference type="FunFam" id="1.10.60.30:FF:000001">
    <property type="entry name" value="UPF0307 protein YjgA"/>
    <property type="match status" value="1"/>
</dbReference>
<dbReference type="FunFam" id="1.10.60.30:FF:000002">
    <property type="entry name" value="UPF0307 protein YjgA"/>
    <property type="match status" value="1"/>
</dbReference>
<dbReference type="Gene3D" id="1.10.60.30">
    <property type="entry name" value="PSPTO4464-like domains"/>
    <property type="match status" value="2"/>
</dbReference>
<dbReference type="HAMAP" id="MF_00765">
    <property type="entry name" value="DarP"/>
    <property type="match status" value="1"/>
</dbReference>
<dbReference type="InterPro" id="IPR006839">
    <property type="entry name" value="DarP"/>
</dbReference>
<dbReference type="InterPro" id="IPR023153">
    <property type="entry name" value="DarP_sf"/>
</dbReference>
<dbReference type="NCBIfam" id="NF003593">
    <property type="entry name" value="PRK05255.1-1"/>
    <property type="match status" value="1"/>
</dbReference>
<dbReference type="PANTHER" id="PTHR38101">
    <property type="entry name" value="UPF0307 PROTEIN YJGA"/>
    <property type="match status" value="1"/>
</dbReference>
<dbReference type="PANTHER" id="PTHR38101:SF1">
    <property type="entry name" value="UPF0307 PROTEIN YJGA"/>
    <property type="match status" value="1"/>
</dbReference>
<dbReference type="Pfam" id="PF04751">
    <property type="entry name" value="DarP"/>
    <property type="match status" value="1"/>
</dbReference>
<dbReference type="PIRSF" id="PIRSF016183">
    <property type="entry name" value="UCP016183"/>
    <property type="match status" value="1"/>
</dbReference>
<dbReference type="SUPFAM" id="SSF158710">
    <property type="entry name" value="PSPTO4464-like"/>
    <property type="match status" value="1"/>
</dbReference>
<reference key="1">
    <citation type="submission" date="2007-11" db="EMBL/GenBank/DDBJ databases">
        <authorList>
            <consortium name="The Salmonella enterica serovar Paratyphi B Genome Sequencing Project"/>
            <person name="McClelland M."/>
            <person name="Sanderson E.K."/>
            <person name="Porwollik S."/>
            <person name="Spieth J."/>
            <person name="Clifton W.S."/>
            <person name="Fulton R."/>
            <person name="Cordes M."/>
            <person name="Wollam A."/>
            <person name="Shah N."/>
            <person name="Pepin K."/>
            <person name="Bhonagiri V."/>
            <person name="Nash W."/>
            <person name="Johnson M."/>
            <person name="Thiruvilangam P."/>
            <person name="Wilson R."/>
        </authorList>
    </citation>
    <scope>NUCLEOTIDE SEQUENCE [LARGE SCALE GENOMIC DNA]</scope>
    <source>
        <strain>ATCC BAA-1250 / SPB7</strain>
    </source>
</reference>
<sequence>MTKQPEDWLDDVPGDDIEDEDDEIIWVSKSEIKRDAEELKRLGAELVDLGKNALDKIPLDADLRDAIELAQRIKMEGRRRQLQLIGKMLRQRDVEPIRQALDKLKNRHNQQVVLFHKLEHLRDRLIVEGDDAVAEVLTLWPHADRQQLRSLIRNAKKEKEGNKPPKSARQIFQYLRELAENEG</sequence>
<organism>
    <name type="scientific">Salmonella paratyphi B (strain ATCC BAA-1250 / SPB7)</name>
    <dbReference type="NCBI Taxonomy" id="1016998"/>
    <lineage>
        <taxon>Bacteria</taxon>
        <taxon>Pseudomonadati</taxon>
        <taxon>Pseudomonadota</taxon>
        <taxon>Gammaproteobacteria</taxon>
        <taxon>Enterobacterales</taxon>
        <taxon>Enterobacteriaceae</taxon>
        <taxon>Salmonella</taxon>
    </lineage>
</organism>
<evidence type="ECO:0000255" key="1">
    <source>
        <dbReference type="HAMAP-Rule" id="MF_00765"/>
    </source>
</evidence>
<feature type="chain" id="PRO_1000083537" description="Dual-action ribosomal maturation protein DarP">
    <location>
        <begin position="1"/>
        <end position="183"/>
    </location>
</feature>
<keyword id="KW-0963">Cytoplasm</keyword>
<keyword id="KW-0690">Ribosome biogenesis</keyword>
<keyword id="KW-0694">RNA-binding</keyword>
<keyword id="KW-0699">rRNA-binding</keyword>
<protein>
    <recommendedName>
        <fullName evidence="1">Dual-action ribosomal maturation protein DarP</fullName>
    </recommendedName>
    <alternativeName>
        <fullName evidence="1">Large ribosomal subunit assembly factor DarP</fullName>
    </alternativeName>
</protein>
<proteinExistence type="inferred from homology"/>